<accession>Q31UX2</accession>
<organism>
    <name type="scientific">Shigella boydii serotype 4 (strain Sb227)</name>
    <dbReference type="NCBI Taxonomy" id="300268"/>
    <lineage>
        <taxon>Bacteria</taxon>
        <taxon>Pseudomonadati</taxon>
        <taxon>Pseudomonadota</taxon>
        <taxon>Gammaproteobacteria</taxon>
        <taxon>Enterobacterales</taxon>
        <taxon>Enterobacteriaceae</taxon>
        <taxon>Shigella</taxon>
    </lineage>
</organism>
<comment type="function">
    <text evidence="2">Part of the ABC transporter complex PstSACB involved in phosphate import. Responsible for energy coupling to the transport system.</text>
</comment>
<comment type="catalytic activity">
    <reaction evidence="2">
        <text>phosphate(out) + ATP + H2O = ADP + 2 phosphate(in) + H(+)</text>
        <dbReference type="Rhea" id="RHEA:24440"/>
        <dbReference type="ChEBI" id="CHEBI:15377"/>
        <dbReference type="ChEBI" id="CHEBI:15378"/>
        <dbReference type="ChEBI" id="CHEBI:30616"/>
        <dbReference type="ChEBI" id="CHEBI:43474"/>
        <dbReference type="ChEBI" id="CHEBI:456216"/>
        <dbReference type="EC" id="7.3.2.1"/>
    </reaction>
</comment>
<comment type="subunit">
    <text evidence="2">The complex is composed of two ATP-binding proteins (PstB), two transmembrane proteins (PstC and PstA) and a solute-binding protein (PstS).</text>
</comment>
<comment type="subcellular location">
    <subcellularLocation>
        <location evidence="2">Cell inner membrane</location>
        <topology evidence="2">Peripheral membrane protein</topology>
    </subcellularLocation>
</comment>
<comment type="similarity">
    <text evidence="2">Belongs to the ABC transporter superfamily. Phosphate importer (TC 3.A.1.7) family.</text>
</comment>
<feature type="initiator methionine" description="Removed" evidence="1">
    <location>
        <position position="1"/>
    </location>
</feature>
<feature type="chain" id="PRO_0000272527" description="Phosphate import ATP-binding protein PstB">
    <location>
        <begin position="2"/>
        <end position="257"/>
    </location>
</feature>
<feature type="domain" description="ABC transporter" evidence="2">
    <location>
        <begin position="11"/>
        <end position="252"/>
    </location>
</feature>
<feature type="binding site" evidence="2">
    <location>
        <begin position="43"/>
        <end position="50"/>
    </location>
    <ligand>
        <name>ATP</name>
        <dbReference type="ChEBI" id="CHEBI:30616"/>
    </ligand>
</feature>
<evidence type="ECO:0000250" key="1"/>
<evidence type="ECO:0000255" key="2">
    <source>
        <dbReference type="HAMAP-Rule" id="MF_01702"/>
    </source>
</evidence>
<protein>
    <recommendedName>
        <fullName evidence="2">Phosphate import ATP-binding protein PstB</fullName>
        <ecNumber evidence="2">7.3.2.1</ecNumber>
    </recommendedName>
    <alternativeName>
        <fullName evidence="2">ABC phosphate transporter</fullName>
    </alternativeName>
    <alternativeName>
        <fullName evidence="2">Phosphate-transporting ATPase</fullName>
    </alternativeName>
</protein>
<keyword id="KW-0067">ATP-binding</keyword>
<keyword id="KW-0997">Cell inner membrane</keyword>
<keyword id="KW-1003">Cell membrane</keyword>
<keyword id="KW-0472">Membrane</keyword>
<keyword id="KW-0547">Nucleotide-binding</keyword>
<keyword id="KW-0592">Phosphate transport</keyword>
<keyword id="KW-1278">Translocase</keyword>
<keyword id="KW-0813">Transport</keyword>
<proteinExistence type="inferred from homology"/>
<reference key="1">
    <citation type="journal article" date="2005" name="Nucleic Acids Res.">
        <title>Genome dynamics and diversity of Shigella species, the etiologic agents of bacillary dysentery.</title>
        <authorList>
            <person name="Yang F."/>
            <person name="Yang J."/>
            <person name="Zhang X."/>
            <person name="Chen L."/>
            <person name="Jiang Y."/>
            <person name="Yan Y."/>
            <person name="Tang X."/>
            <person name="Wang J."/>
            <person name="Xiong Z."/>
            <person name="Dong J."/>
            <person name="Xue Y."/>
            <person name="Zhu Y."/>
            <person name="Xu X."/>
            <person name="Sun L."/>
            <person name="Chen S."/>
            <person name="Nie H."/>
            <person name="Peng J."/>
            <person name="Xu J."/>
            <person name="Wang Y."/>
            <person name="Yuan Z."/>
            <person name="Wen Y."/>
            <person name="Yao Z."/>
            <person name="Shen Y."/>
            <person name="Qiang B."/>
            <person name="Hou Y."/>
            <person name="Yu J."/>
            <person name="Jin Q."/>
        </authorList>
    </citation>
    <scope>NUCLEOTIDE SEQUENCE [LARGE SCALE GENOMIC DNA]</scope>
    <source>
        <strain>Sb227</strain>
    </source>
</reference>
<name>PSTB_SHIBS</name>
<sequence length="257" mass="29027">MSMVETAPSKIQVRNLNFYYGKFHALKNINLDIAKNQVTAFIGPSGCGKSTLLRTFNKMFELYPEQRAEGEILLDGDNILTNSQDIALLRAKVGMVFQKPTPFPMSIYDNIAFGVRLFEKLSRADMDERVQWALTKAALWNETKDKLHQSGYSLSGGQQQRLCIARGIAIRPEVLLLDEPCSALDPISTGRIEELITELKQDYTVVIVTHNMQQAARCSDHTAFMYLGELIEFSNTDDLFTKPAKKQTEDYITGRYG</sequence>
<dbReference type="EC" id="7.3.2.1" evidence="2"/>
<dbReference type="EMBL" id="CP000036">
    <property type="protein sequence ID" value="ABB68136.1"/>
    <property type="molecule type" value="Genomic_DNA"/>
</dbReference>
<dbReference type="RefSeq" id="WP_000063125.1">
    <property type="nucleotide sequence ID" value="NC_007613.1"/>
</dbReference>
<dbReference type="SMR" id="Q31UX2"/>
<dbReference type="GeneID" id="93778212"/>
<dbReference type="KEGG" id="sbo:SBO_3657"/>
<dbReference type="HOGENOM" id="CLU_000604_1_22_6"/>
<dbReference type="Proteomes" id="UP000007067">
    <property type="component" value="Chromosome"/>
</dbReference>
<dbReference type="GO" id="GO:0005886">
    <property type="term" value="C:plasma membrane"/>
    <property type="evidence" value="ECO:0007669"/>
    <property type="project" value="UniProtKB-SubCell"/>
</dbReference>
<dbReference type="GO" id="GO:0005524">
    <property type="term" value="F:ATP binding"/>
    <property type="evidence" value="ECO:0007669"/>
    <property type="project" value="UniProtKB-KW"/>
</dbReference>
<dbReference type="GO" id="GO:0016887">
    <property type="term" value="F:ATP hydrolysis activity"/>
    <property type="evidence" value="ECO:0007669"/>
    <property type="project" value="InterPro"/>
</dbReference>
<dbReference type="GO" id="GO:0015415">
    <property type="term" value="F:ATPase-coupled phosphate ion transmembrane transporter activity"/>
    <property type="evidence" value="ECO:0007669"/>
    <property type="project" value="UniProtKB-EC"/>
</dbReference>
<dbReference type="GO" id="GO:0035435">
    <property type="term" value="P:phosphate ion transmembrane transport"/>
    <property type="evidence" value="ECO:0007669"/>
    <property type="project" value="InterPro"/>
</dbReference>
<dbReference type="CDD" id="cd03260">
    <property type="entry name" value="ABC_PstB_phosphate_transporter"/>
    <property type="match status" value="1"/>
</dbReference>
<dbReference type="FunFam" id="3.40.50.300:FF:000132">
    <property type="entry name" value="Phosphate import ATP-binding protein PstB"/>
    <property type="match status" value="1"/>
</dbReference>
<dbReference type="Gene3D" id="3.40.50.300">
    <property type="entry name" value="P-loop containing nucleotide triphosphate hydrolases"/>
    <property type="match status" value="1"/>
</dbReference>
<dbReference type="InterPro" id="IPR003593">
    <property type="entry name" value="AAA+_ATPase"/>
</dbReference>
<dbReference type="InterPro" id="IPR003439">
    <property type="entry name" value="ABC_transporter-like_ATP-bd"/>
</dbReference>
<dbReference type="InterPro" id="IPR017871">
    <property type="entry name" value="ABC_transporter-like_CS"/>
</dbReference>
<dbReference type="InterPro" id="IPR027417">
    <property type="entry name" value="P-loop_NTPase"/>
</dbReference>
<dbReference type="InterPro" id="IPR005670">
    <property type="entry name" value="PstB-like"/>
</dbReference>
<dbReference type="NCBIfam" id="TIGR00972">
    <property type="entry name" value="3a0107s01c2"/>
    <property type="match status" value="1"/>
</dbReference>
<dbReference type="PANTHER" id="PTHR43423">
    <property type="entry name" value="ABC TRANSPORTER I FAMILY MEMBER 17"/>
    <property type="match status" value="1"/>
</dbReference>
<dbReference type="PANTHER" id="PTHR43423:SF3">
    <property type="entry name" value="PHOSPHATE IMPORT ATP-BINDING PROTEIN PSTB"/>
    <property type="match status" value="1"/>
</dbReference>
<dbReference type="Pfam" id="PF00005">
    <property type="entry name" value="ABC_tran"/>
    <property type="match status" value="1"/>
</dbReference>
<dbReference type="SMART" id="SM00382">
    <property type="entry name" value="AAA"/>
    <property type="match status" value="1"/>
</dbReference>
<dbReference type="SUPFAM" id="SSF52540">
    <property type="entry name" value="P-loop containing nucleoside triphosphate hydrolases"/>
    <property type="match status" value="1"/>
</dbReference>
<dbReference type="PROSITE" id="PS00211">
    <property type="entry name" value="ABC_TRANSPORTER_1"/>
    <property type="match status" value="1"/>
</dbReference>
<dbReference type="PROSITE" id="PS50893">
    <property type="entry name" value="ABC_TRANSPORTER_2"/>
    <property type="match status" value="1"/>
</dbReference>
<dbReference type="PROSITE" id="PS51238">
    <property type="entry name" value="PSTB"/>
    <property type="match status" value="1"/>
</dbReference>
<gene>
    <name evidence="2" type="primary">pstB</name>
    <name type="ordered locus">SBO_3657</name>
</gene>